<comment type="function">
    <text evidence="1">Part of the ABC transporter complex LsrABCD involved in autoinducer 2 (AI-2) import. Probably responsible for the translocation of the substrate across the membrane (By similarity).</text>
</comment>
<comment type="subunit">
    <text evidence="1">The complex is composed of two ATP-binding proteins (LsrA), two transmembrane proteins (LsrC and LsrD) and a solute-binding protein (LsrB).</text>
</comment>
<comment type="subcellular location">
    <subcellularLocation>
        <location evidence="1">Cell inner membrane</location>
        <topology evidence="1">Multi-pass membrane protein</topology>
    </subcellularLocation>
</comment>
<comment type="similarity">
    <text evidence="3">Belongs to the binding-protein-dependent transport system permease family. AraH/RbsC subfamily.</text>
</comment>
<reference key="1">
    <citation type="journal article" date="2003" name="Nat. Biotechnol.">
        <title>The genome sequence of the entomopathogenic bacterium Photorhabdus luminescens.</title>
        <authorList>
            <person name="Duchaud E."/>
            <person name="Rusniok C."/>
            <person name="Frangeul L."/>
            <person name="Buchrieser C."/>
            <person name="Givaudan A."/>
            <person name="Taourit S."/>
            <person name="Bocs S."/>
            <person name="Boursaux-Eude C."/>
            <person name="Chandler M."/>
            <person name="Charles J.-F."/>
            <person name="Dassa E."/>
            <person name="Derose R."/>
            <person name="Derzelle S."/>
            <person name="Freyssinet G."/>
            <person name="Gaudriault S."/>
            <person name="Medigue C."/>
            <person name="Lanois A."/>
            <person name="Powell K."/>
            <person name="Siguier P."/>
            <person name="Vincent R."/>
            <person name="Wingate V."/>
            <person name="Zouine M."/>
            <person name="Glaser P."/>
            <person name="Boemare N."/>
            <person name="Danchin A."/>
            <person name="Kunst F."/>
        </authorList>
    </citation>
    <scope>NUCLEOTIDE SEQUENCE [LARGE SCALE GENOMIC DNA]</scope>
    <source>
        <strain>DSM 15139 / CIP 105565 / TT01</strain>
    </source>
</reference>
<dbReference type="EMBL" id="BX571869">
    <property type="protein sequence ID" value="CAE15518.1"/>
    <property type="molecule type" value="Genomic_DNA"/>
</dbReference>
<dbReference type="RefSeq" id="WP_011147355.1">
    <property type="nucleotide sequence ID" value="NC_005126.1"/>
</dbReference>
<dbReference type="STRING" id="243265.plu3144"/>
<dbReference type="GeneID" id="48849403"/>
<dbReference type="KEGG" id="plu:plu3144"/>
<dbReference type="eggNOG" id="COG1172">
    <property type="taxonomic scope" value="Bacteria"/>
</dbReference>
<dbReference type="HOGENOM" id="CLU_028880_0_1_6"/>
<dbReference type="OrthoDB" id="6384190at2"/>
<dbReference type="Proteomes" id="UP000002514">
    <property type="component" value="Chromosome"/>
</dbReference>
<dbReference type="GO" id="GO:0005886">
    <property type="term" value="C:plasma membrane"/>
    <property type="evidence" value="ECO:0007669"/>
    <property type="project" value="UniProtKB-SubCell"/>
</dbReference>
<dbReference type="GO" id="GO:0022857">
    <property type="term" value="F:transmembrane transporter activity"/>
    <property type="evidence" value="ECO:0007669"/>
    <property type="project" value="InterPro"/>
</dbReference>
<dbReference type="CDD" id="cd06579">
    <property type="entry name" value="TM_PBP1_transp_AraH_like"/>
    <property type="match status" value="1"/>
</dbReference>
<dbReference type="InterPro" id="IPR001851">
    <property type="entry name" value="ABC_transp_permease"/>
</dbReference>
<dbReference type="NCBIfam" id="NF011961">
    <property type="entry name" value="PRK15432.1"/>
    <property type="match status" value="1"/>
</dbReference>
<dbReference type="PANTHER" id="PTHR32196">
    <property type="entry name" value="ABC TRANSPORTER PERMEASE PROTEIN YPHD-RELATED-RELATED"/>
    <property type="match status" value="1"/>
</dbReference>
<dbReference type="PANTHER" id="PTHR32196:SF29">
    <property type="entry name" value="AUTOINDUCER 2 IMPORT SYSTEM PERMEASE PROTEIN LSRC"/>
    <property type="match status" value="1"/>
</dbReference>
<dbReference type="Pfam" id="PF02653">
    <property type="entry name" value="BPD_transp_2"/>
    <property type="match status" value="1"/>
</dbReference>
<proteinExistence type="inferred from homology"/>
<gene>
    <name type="primary">lsrC</name>
    <name type="ordered locus">plu3144</name>
</gene>
<organism>
    <name type="scientific">Photorhabdus laumondii subsp. laumondii (strain DSM 15139 / CIP 105565 / TT01)</name>
    <name type="common">Photorhabdus luminescens subsp. laumondii</name>
    <dbReference type="NCBI Taxonomy" id="243265"/>
    <lineage>
        <taxon>Bacteria</taxon>
        <taxon>Pseudomonadati</taxon>
        <taxon>Pseudomonadota</taxon>
        <taxon>Gammaproteobacteria</taxon>
        <taxon>Enterobacterales</taxon>
        <taxon>Morganellaceae</taxon>
        <taxon>Photorhabdus</taxon>
    </lineage>
</organism>
<evidence type="ECO:0000250" key="1"/>
<evidence type="ECO:0000255" key="2"/>
<evidence type="ECO:0000305" key="3"/>
<sequence length="333" mass="35726">MLKLIQNNREITALIAILCLFGLLSVIDHQYFSLQTVTLVFSSAQILILLAMGATLVMLTRNIDVSVGSIAGLCAVIMGMSLNAGFSLSVSCLLTLLLGMCAGFFNGALVTWLKIPAIVTTLGTLGLYRGLMLLLTDGKWIEGLPDELKRLSAPLWLNISPIGWLLMILILAMAWILAKTPFGRSFYATGDNLQGARQLGVRTDSIQIIAFSVNGVMAALAGIVFASQIGFIPNQTGSGLEMRAIAACVLGGISLLGGTGTVIGAILGAFFLTQINSGLVLLKLPAWWNDFIAGFVLLAVLIFDGRLRCAIEKNIRQQKYARFLKNDKSNQVT</sequence>
<keyword id="KW-0997">Cell inner membrane</keyword>
<keyword id="KW-1003">Cell membrane</keyword>
<keyword id="KW-0472">Membrane</keyword>
<keyword id="KW-1185">Reference proteome</keyword>
<keyword id="KW-0812">Transmembrane</keyword>
<keyword id="KW-1133">Transmembrane helix</keyword>
<keyword id="KW-0813">Transport</keyword>
<feature type="chain" id="PRO_0000351344" description="Autoinducer 2 import system permease protein LsrC">
    <location>
        <begin position="1"/>
        <end position="333"/>
    </location>
</feature>
<feature type="transmembrane region" description="Helical" evidence="2">
    <location>
        <begin position="14"/>
        <end position="34"/>
    </location>
</feature>
<feature type="transmembrane region" description="Helical" evidence="2">
    <location>
        <begin position="39"/>
        <end position="59"/>
    </location>
</feature>
<feature type="transmembrane region" description="Helical" evidence="2">
    <location>
        <begin position="70"/>
        <end position="90"/>
    </location>
</feature>
<feature type="transmembrane region" description="Helical" evidence="2">
    <location>
        <begin position="93"/>
        <end position="113"/>
    </location>
</feature>
<feature type="transmembrane region" description="Helical" evidence="2">
    <location>
        <begin position="115"/>
        <end position="135"/>
    </location>
</feature>
<feature type="transmembrane region" description="Helical" evidence="2">
    <location>
        <begin position="157"/>
        <end position="177"/>
    </location>
</feature>
<feature type="transmembrane region" description="Helical" evidence="2">
    <location>
        <begin position="206"/>
        <end position="226"/>
    </location>
</feature>
<feature type="transmembrane region" description="Helical" evidence="2">
    <location>
        <begin position="252"/>
        <end position="272"/>
    </location>
</feature>
<feature type="transmembrane region" description="Helical" evidence="2">
    <location>
        <begin position="284"/>
        <end position="304"/>
    </location>
</feature>
<accession>Q7N2D8</accession>
<protein>
    <recommendedName>
        <fullName>Autoinducer 2 import system permease protein LsrC</fullName>
        <shortName>AI-2 import system permease protein LsrC</shortName>
    </recommendedName>
</protein>
<name>LSRC_PHOLL</name>